<accession>Q8SQ34</accession>
<sequence>MVRLPLKCLLWGCFLTAVHPEPPTSCKENQYPTNSRCCNLCPPGQKLVNHCTEVTETECLPCSSSEFLATWNREKHCHQHKYCDPNLGLQVQREGTSKTDTTCVCSEGHHCTNSACESCTLHSLCFPGLGVKQMATEVSDTICEPCPVGFFSNVSSASEKCQPWTSCESKGLVEQRAGTNKTDVVCGFQSRMRALVVIPITLGILFAVLLVFLCIRKVTKEQETKALHPKTERQDPVETIDLEDFPDSTAPVQETLHWCQPVTQEDGKESRISVQERE</sequence>
<proteinExistence type="evidence at transcript level"/>
<reference key="1">
    <citation type="submission" date="2000-03" db="EMBL/GenBank/DDBJ databases">
        <title>Characterization of the porcine CD40 molecule.</title>
        <authorList>
            <person name="West K.A."/>
            <person name="Li A.W."/>
            <person name="Rowden G."/>
        </authorList>
    </citation>
    <scope>NUCLEOTIDE SEQUENCE [MRNA]</scope>
</reference>
<evidence type="ECO:0000250" key="1"/>
<evidence type="ECO:0000250" key="2">
    <source>
        <dbReference type="UniProtKB" id="P25942"/>
    </source>
</evidence>
<evidence type="ECO:0000250" key="3">
    <source>
        <dbReference type="UniProtKB" id="P27512"/>
    </source>
</evidence>
<evidence type="ECO:0000255" key="4"/>
<evidence type="ECO:0000255" key="5">
    <source>
        <dbReference type="PROSITE-ProRule" id="PRU00206"/>
    </source>
</evidence>
<feature type="signal peptide" evidence="4">
    <location>
        <begin position="1"/>
        <end position="20"/>
    </location>
</feature>
<feature type="chain" id="PRO_0000252696" description="Tumor necrosis factor receptor superfamily member 5">
    <location>
        <begin position="21"/>
        <end position="278"/>
    </location>
</feature>
<feature type="topological domain" description="Extracellular" evidence="4">
    <location>
        <begin position="21"/>
        <end position="194"/>
    </location>
</feature>
<feature type="transmembrane region" description="Helical" evidence="4">
    <location>
        <begin position="195"/>
        <end position="215"/>
    </location>
</feature>
<feature type="topological domain" description="Cytoplasmic" evidence="4">
    <location>
        <begin position="216"/>
        <end position="278"/>
    </location>
</feature>
<feature type="repeat" description="TNFR-Cys 1">
    <location>
        <begin position="25"/>
        <end position="60"/>
    </location>
</feature>
<feature type="repeat" description="TNFR-Cys 2">
    <location>
        <begin position="61"/>
        <end position="103"/>
    </location>
</feature>
<feature type="repeat" description="TNFR-Cys 3">
    <location>
        <begin position="104"/>
        <end position="144"/>
    </location>
</feature>
<feature type="repeat" description="TNFR-Cys 4">
    <location>
        <begin position="145"/>
        <end position="187"/>
    </location>
</feature>
<feature type="glycosylation site" description="N-linked (GlcNAc...) asparagine" evidence="4">
    <location>
        <position position="153"/>
    </location>
</feature>
<feature type="glycosylation site" description="N-linked (GlcNAc...) asparagine" evidence="4">
    <location>
        <position position="180"/>
    </location>
</feature>
<feature type="disulfide bond" evidence="5">
    <location>
        <begin position="26"/>
        <end position="37"/>
    </location>
</feature>
<feature type="disulfide bond" evidence="5">
    <location>
        <begin position="38"/>
        <end position="51"/>
    </location>
</feature>
<feature type="disulfide bond" evidence="5">
    <location>
        <begin position="41"/>
        <end position="59"/>
    </location>
</feature>
<feature type="disulfide bond" evidence="5">
    <location>
        <begin position="62"/>
        <end position="77"/>
    </location>
</feature>
<feature type="disulfide bond" evidence="5">
    <location>
        <begin position="83"/>
        <end position="103"/>
    </location>
</feature>
<feature type="disulfide bond" evidence="5">
    <location>
        <begin position="105"/>
        <end position="119"/>
    </location>
</feature>
<feature type="disulfide bond" evidence="5">
    <location>
        <begin position="111"/>
        <end position="116"/>
    </location>
</feature>
<feature type="disulfide bond" evidence="5">
    <location>
        <begin position="125"/>
        <end position="143"/>
    </location>
</feature>
<keyword id="KW-1015">Disulfide bond</keyword>
<keyword id="KW-0325">Glycoprotein</keyword>
<keyword id="KW-0391">Immunity</keyword>
<keyword id="KW-0472">Membrane</keyword>
<keyword id="KW-0675">Receptor</keyword>
<keyword id="KW-1185">Reference proteome</keyword>
<keyword id="KW-0677">Repeat</keyword>
<keyword id="KW-0732">Signal</keyword>
<keyword id="KW-0812">Transmembrane</keyword>
<keyword id="KW-1133">Transmembrane helix</keyword>
<name>TNR5_PIG</name>
<protein>
    <recommendedName>
        <fullName>Tumor necrosis factor receptor superfamily member 5</fullName>
    </recommendedName>
    <alternativeName>
        <fullName>B-cell surface antigen CD40</fullName>
    </alternativeName>
    <alternativeName>
        <fullName>CD40L receptor</fullName>
    </alternativeName>
    <cdAntigenName>CD40</cdAntigenName>
</protein>
<gene>
    <name type="primary">CD40</name>
    <name type="synonym">TNFRSF5</name>
</gene>
<comment type="function">
    <text evidence="2 3">Receptor for TNFSF5/CD40LG (By similarity). Transduces TRAF6- and MAP3K8-mediated signals that activate ERK in macrophages and B cells, leading to induction of immunoglobulin secretion (By similarity).</text>
</comment>
<comment type="subunit">
    <text evidence="1">Monomer and homodimer. Interacts with TRAF1, TRAF2, TRAF3, TRAF5 and TRAF6. Interacts with TRAF6 and MAP3K8; the interaction is required for ERK activation (By similarity).</text>
</comment>
<comment type="subcellular location">
    <subcellularLocation>
        <location>Membrane</location>
        <topology>Single-pass type I membrane protein</topology>
    </subcellularLocation>
</comment>
<organism>
    <name type="scientific">Sus scrofa</name>
    <name type="common">Pig</name>
    <dbReference type="NCBI Taxonomy" id="9823"/>
    <lineage>
        <taxon>Eukaryota</taxon>
        <taxon>Metazoa</taxon>
        <taxon>Chordata</taxon>
        <taxon>Craniata</taxon>
        <taxon>Vertebrata</taxon>
        <taxon>Euteleostomi</taxon>
        <taxon>Mammalia</taxon>
        <taxon>Eutheria</taxon>
        <taxon>Laurasiatheria</taxon>
        <taxon>Artiodactyla</taxon>
        <taxon>Suina</taxon>
        <taxon>Suidae</taxon>
        <taxon>Sus</taxon>
    </lineage>
</organism>
<dbReference type="EMBL" id="AF248545">
    <property type="protein sequence ID" value="AAL92924.1"/>
    <property type="molecule type" value="mRNA"/>
</dbReference>
<dbReference type="RefSeq" id="NP_999359.1">
    <property type="nucleotide sequence ID" value="NM_214194.1"/>
</dbReference>
<dbReference type="SMR" id="Q8SQ34"/>
<dbReference type="FunCoup" id="Q8SQ34">
    <property type="interactions" value="184"/>
</dbReference>
<dbReference type="STRING" id="9823.ENSSSCP00000052319"/>
<dbReference type="GlyCosmos" id="Q8SQ34">
    <property type="glycosylation" value="2 sites, No reported glycans"/>
</dbReference>
<dbReference type="GlyGen" id="Q8SQ34">
    <property type="glycosylation" value="2 sites"/>
</dbReference>
<dbReference type="PaxDb" id="9823-ENSSSCP00000007928"/>
<dbReference type="PeptideAtlas" id="Q8SQ34"/>
<dbReference type="Ensembl" id="ENSSSCT00000066346.2">
    <property type="protein sequence ID" value="ENSSSCP00000052319.1"/>
    <property type="gene ID" value="ENSSSCG00000035078.2"/>
</dbReference>
<dbReference type="Ensembl" id="ENSSSCT00015038169.1">
    <property type="protein sequence ID" value="ENSSSCP00015015138.1"/>
    <property type="gene ID" value="ENSSSCG00015028728.1"/>
</dbReference>
<dbReference type="Ensembl" id="ENSSSCT00025096562.1">
    <property type="protein sequence ID" value="ENSSSCP00025042389.1"/>
    <property type="gene ID" value="ENSSSCG00025070155.1"/>
</dbReference>
<dbReference type="Ensembl" id="ENSSSCT00030081953.1">
    <property type="protein sequence ID" value="ENSSSCP00030037603.1"/>
    <property type="gene ID" value="ENSSSCG00030058710.1"/>
</dbReference>
<dbReference type="Ensembl" id="ENSSSCT00035105550.1">
    <property type="protein sequence ID" value="ENSSSCP00035045348.1"/>
    <property type="gene ID" value="ENSSSCG00035077420.1"/>
</dbReference>
<dbReference type="Ensembl" id="ENSSSCT00040042988.1">
    <property type="protein sequence ID" value="ENSSSCP00040018032.1"/>
    <property type="gene ID" value="ENSSSCG00040031845.1"/>
</dbReference>
<dbReference type="Ensembl" id="ENSSSCT00045001892.1">
    <property type="protein sequence ID" value="ENSSSCP00045001193.1"/>
    <property type="gene ID" value="ENSSSCG00045001206.1"/>
</dbReference>
<dbReference type="Ensembl" id="ENSSSCT00050099574.1">
    <property type="protein sequence ID" value="ENSSSCP00050043085.1"/>
    <property type="gene ID" value="ENSSSCG00050072902.1"/>
</dbReference>
<dbReference type="Ensembl" id="ENSSSCT00055032137.1">
    <property type="protein sequence ID" value="ENSSSCP00055025587.1"/>
    <property type="gene ID" value="ENSSSCG00055016257.1"/>
</dbReference>
<dbReference type="Ensembl" id="ENSSSCT00060038779.1">
    <property type="protein sequence ID" value="ENSSSCP00060016477.1"/>
    <property type="gene ID" value="ENSSSCG00060028687.1"/>
</dbReference>
<dbReference type="Ensembl" id="ENSSSCT00065003487.1">
    <property type="protein sequence ID" value="ENSSSCP00065001273.1"/>
    <property type="gene ID" value="ENSSSCG00065002701.1"/>
</dbReference>
<dbReference type="Ensembl" id="ENSSSCT00070027435.1">
    <property type="protein sequence ID" value="ENSSSCP00070022824.1"/>
    <property type="gene ID" value="ENSSSCG00070014007.1"/>
</dbReference>
<dbReference type="Ensembl" id="ENSSSCT00085048051">
    <property type="protein sequence ID" value="ENSSSCP00085033582"/>
    <property type="gene ID" value="ENSSSCG00085025048"/>
</dbReference>
<dbReference type="Ensembl" id="ENSSSCT00090005691">
    <property type="protein sequence ID" value="ENSSSCP00090003559"/>
    <property type="gene ID" value="ENSSSCG00090003257"/>
</dbReference>
<dbReference type="Ensembl" id="ENSSSCT00105029614">
    <property type="protein sequence ID" value="ENSSSCP00105020595"/>
    <property type="gene ID" value="ENSSSCG00105015369"/>
</dbReference>
<dbReference type="Ensembl" id="ENSSSCT00110045446">
    <property type="protein sequence ID" value="ENSSSCP00110032072"/>
    <property type="gene ID" value="ENSSSCG00110023484"/>
</dbReference>
<dbReference type="Ensembl" id="ENSSSCT00115014929">
    <property type="protein sequence ID" value="ENSSSCP00115014112"/>
    <property type="gene ID" value="ENSSSCG00115008542"/>
</dbReference>
<dbReference type="GeneID" id="397395"/>
<dbReference type="KEGG" id="ssc:397395"/>
<dbReference type="CTD" id="958"/>
<dbReference type="VGNC" id="VGNC:95545">
    <property type="gene designation" value="CD40"/>
</dbReference>
<dbReference type="eggNOG" id="ENOG502S5TQ">
    <property type="taxonomic scope" value="Eukaryota"/>
</dbReference>
<dbReference type="GeneTree" id="ENSGT00940000161464"/>
<dbReference type="HOGENOM" id="CLU_052667_4_0_1"/>
<dbReference type="InParanoid" id="Q8SQ34"/>
<dbReference type="OMA" id="WTKERHC"/>
<dbReference type="OrthoDB" id="9932129at2759"/>
<dbReference type="TreeFam" id="TF331157"/>
<dbReference type="Reactome" id="R-SSC-198933">
    <property type="pathway name" value="Immunoregulatory interactions between a Lymphoid and a non-Lymphoid cell"/>
</dbReference>
<dbReference type="Reactome" id="R-SSC-5668541">
    <property type="pathway name" value="TNFR2 non-canonical NF-kB pathway"/>
</dbReference>
<dbReference type="Reactome" id="R-SSC-5676594">
    <property type="pathway name" value="TNF receptor superfamily (TNFSF) members mediating non-canonical NF-kB pathway"/>
</dbReference>
<dbReference type="Proteomes" id="UP000008227">
    <property type="component" value="Chromosome 17"/>
</dbReference>
<dbReference type="Proteomes" id="UP000314985">
    <property type="component" value="Chromosome 17"/>
</dbReference>
<dbReference type="Proteomes" id="UP000694570">
    <property type="component" value="Unplaced"/>
</dbReference>
<dbReference type="Proteomes" id="UP000694571">
    <property type="component" value="Unplaced"/>
</dbReference>
<dbReference type="Proteomes" id="UP000694720">
    <property type="component" value="Unplaced"/>
</dbReference>
<dbReference type="Proteomes" id="UP000694722">
    <property type="component" value="Unplaced"/>
</dbReference>
<dbReference type="Proteomes" id="UP000694723">
    <property type="component" value="Unplaced"/>
</dbReference>
<dbReference type="Proteomes" id="UP000694724">
    <property type="component" value="Unplaced"/>
</dbReference>
<dbReference type="Proteomes" id="UP000694725">
    <property type="component" value="Unplaced"/>
</dbReference>
<dbReference type="Proteomes" id="UP000694726">
    <property type="component" value="Unplaced"/>
</dbReference>
<dbReference type="Proteomes" id="UP000694727">
    <property type="component" value="Unplaced"/>
</dbReference>
<dbReference type="Proteomes" id="UP000694728">
    <property type="component" value="Unplaced"/>
</dbReference>
<dbReference type="Bgee" id="ENSSSCG00000035078">
    <property type="expression patterns" value="Expressed in tonsil and 44 other cell types or tissues"/>
</dbReference>
<dbReference type="ExpressionAtlas" id="Q8SQ34">
    <property type="expression patterns" value="baseline and differential"/>
</dbReference>
<dbReference type="GO" id="GO:0035631">
    <property type="term" value="C:CD40 receptor complex"/>
    <property type="evidence" value="ECO:0000318"/>
    <property type="project" value="GO_Central"/>
</dbReference>
<dbReference type="GO" id="GO:0009897">
    <property type="term" value="C:external side of plasma membrane"/>
    <property type="evidence" value="ECO:0000318"/>
    <property type="project" value="GO_Central"/>
</dbReference>
<dbReference type="GO" id="GO:0043231">
    <property type="term" value="C:intracellular membrane-bounded organelle"/>
    <property type="evidence" value="ECO:0007669"/>
    <property type="project" value="Ensembl"/>
</dbReference>
<dbReference type="GO" id="GO:0038023">
    <property type="term" value="F:signaling receptor activity"/>
    <property type="evidence" value="ECO:0007669"/>
    <property type="project" value="Ensembl"/>
</dbReference>
<dbReference type="GO" id="GO:0031625">
    <property type="term" value="F:ubiquitin protein ligase binding"/>
    <property type="evidence" value="ECO:0007669"/>
    <property type="project" value="Ensembl"/>
</dbReference>
<dbReference type="GO" id="GO:0042113">
    <property type="term" value="P:B cell activation"/>
    <property type="evidence" value="ECO:0000318"/>
    <property type="project" value="GO_Central"/>
</dbReference>
<dbReference type="GO" id="GO:0019724">
    <property type="term" value="P:B cell mediated immunity"/>
    <property type="evidence" value="ECO:0007669"/>
    <property type="project" value="Ensembl"/>
</dbReference>
<dbReference type="GO" id="GO:0042100">
    <property type="term" value="P:B cell proliferation"/>
    <property type="evidence" value="ECO:0007669"/>
    <property type="project" value="Ensembl"/>
</dbReference>
<dbReference type="GO" id="GO:0023035">
    <property type="term" value="P:CD40 signaling pathway"/>
    <property type="evidence" value="ECO:0007669"/>
    <property type="project" value="Ensembl"/>
</dbReference>
<dbReference type="GO" id="GO:0007259">
    <property type="term" value="P:cell surface receptor signaling pathway via JAK-STAT"/>
    <property type="evidence" value="ECO:0007669"/>
    <property type="project" value="Ensembl"/>
</dbReference>
<dbReference type="GO" id="GO:0071260">
    <property type="term" value="P:cellular response to mechanical stimulus"/>
    <property type="evidence" value="ECO:0007669"/>
    <property type="project" value="Ensembl"/>
</dbReference>
<dbReference type="GO" id="GO:0042832">
    <property type="term" value="P:defense response to protozoan"/>
    <property type="evidence" value="ECO:0007669"/>
    <property type="project" value="Ensembl"/>
</dbReference>
<dbReference type="GO" id="GO:0051607">
    <property type="term" value="P:defense response to virus"/>
    <property type="evidence" value="ECO:0007669"/>
    <property type="project" value="Ensembl"/>
</dbReference>
<dbReference type="GO" id="GO:0002768">
    <property type="term" value="P:immune response-regulating cell surface receptor signaling pathway"/>
    <property type="evidence" value="ECO:0000318"/>
    <property type="project" value="GO_Central"/>
</dbReference>
<dbReference type="GO" id="GO:0006874">
    <property type="term" value="P:intracellular calcium ion homeostasis"/>
    <property type="evidence" value="ECO:0007669"/>
    <property type="project" value="Ensembl"/>
</dbReference>
<dbReference type="GO" id="GO:0043491">
    <property type="term" value="P:phosphatidylinositol 3-kinase/protein kinase B signal transduction"/>
    <property type="evidence" value="ECO:0007669"/>
    <property type="project" value="Ensembl"/>
</dbReference>
<dbReference type="GO" id="GO:0045766">
    <property type="term" value="P:positive regulation of angiogenesis"/>
    <property type="evidence" value="ECO:0007669"/>
    <property type="project" value="Ensembl"/>
</dbReference>
<dbReference type="GO" id="GO:0030890">
    <property type="term" value="P:positive regulation of B cell proliferation"/>
    <property type="evidence" value="ECO:0007669"/>
    <property type="project" value="Ensembl"/>
</dbReference>
<dbReference type="GO" id="GO:0043536">
    <property type="term" value="P:positive regulation of blood vessel endothelial cell migration"/>
    <property type="evidence" value="ECO:0007669"/>
    <property type="project" value="Ensembl"/>
</dbReference>
<dbReference type="GO" id="GO:0043123">
    <property type="term" value="P:positive regulation of canonical NF-kappaB signal transduction"/>
    <property type="evidence" value="ECO:0007669"/>
    <property type="project" value="Ensembl"/>
</dbReference>
<dbReference type="GO" id="GO:2000353">
    <property type="term" value="P:positive regulation of endothelial cell apoptotic process"/>
    <property type="evidence" value="ECO:0007669"/>
    <property type="project" value="Ensembl"/>
</dbReference>
<dbReference type="GO" id="GO:0032735">
    <property type="term" value="P:positive regulation of interleukin-12 production"/>
    <property type="evidence" value="ECO:0007669"/>
    <property type="project" value="Ensembl"/>
</dbReference>
<dbReference type="GO" id="GO:1902216">
    <property type="term" value="P:positive regulation of interleukin-4-mediated signaling pathway"/>
    <property type="evidence" value="ECO:0007669"/>
    <property type="project" value="Ensembl"/>
</dbReference>
<dbReference type="GO" id="GO:0048304">
    <property type="term" value="P:positive regulation of isotype switching to IgG isotypes"/>
    <property type="evidence" value="ECO:0007669"/>
    <property type="project" value="Ensembl"/>
</dbReference>
<dbReference type="GO" id="GO:0043410">
    <property type="term" value="P:positive regulation of MAPK cascade"/>
    <property type="evidence" value="ECO:0007669"/>
    <property type="project" value="Ensembl"/>
</dbReference>
<dbReference type="GO" id="GO:0090037">
    <property type="term" value="P:positive regulation of protein kinase C signaling"/>
    <property type="evidence" value="ECO:0007669"/>
    <property type="project" value="Ensembl"/>
</dbReference>
<dbReference type="GO" id="GO:0045944">
    <property type="term" value="P:positive regulation of transcription by RNA polymerase II"/>
    <property type="evidence" value="ECO:0007669"/>
    <property type="project" value="Ensembl"/>
</dbReference>
<dbReference type="CDD" id="cd13407">
    <property type="entry name" value="TNFRSF5"/>
    <property type="match status" value="1"/>
</dbReference>
<dbReference type="FunFam" id="2.10.50.10:FF:000041">
    <property type="entry name" value="Tumor necrosis factor receptor superfamily member 5"/>
    <property type="match status" value="1"/>
</dbReference>
<dbReference type="Gene3D" id="2.10.50.10">
    <property type="entry name" value="Tumor Necrosis Factor Receptor, subunit A, domain 2"/>
    <property type="match status" value="4"/>
</dbReference>
<dbReference type="InterPro" id="IPR001368">
    <property type="entry name" value="TNFR/NGFR_Cys_rich_reg"/>
</dbReference>
<dbReference type="InterPro" id="IPR020435">
    <property type="entry name" value="TNFR_5"/>
</dbReference>
<dbReference type="InterPro" id="IPR052135">
    <property type="entry name" value="TNFRSF5"/>
</dbReference>
<dbReference type="InterPro" id="IPR034021">
    <property type="entry name" value="TNFRSF5_N"/>
</dbReference>
<dbReference type="PANTHER" id="PTHR46875">
    <property type="entry name" value="TUMOR NECROSIS FACTOR RECEPTOR SUPERFAMILY MEMBER 5"/>
    <property type="match status" value="1"/>
</dbReference>
<dbReference type="PANTHER" id="PTHR46875:SF1">
    <property type="entry name" value="TUMOR NECROSIS FACTOR RECEPTOR SUPERFAMILY MEMBER 5"/>
    <property type="match status" value="1"/>
</dbReference>
<dbReference type="Pfam" id="PF00020">
    <property type="entry name" value="TNFR_c6"/>
    <property type="match status" value="1"/>
</dbReference>
<dbReference type="PRINTS" id="PR01922">
    <property type="entry name" value="TNFACTORR5"/>
</dbReference>
<dbReference type="SMART" id="SM00208">
    <property type="entry name" value="TNFR"/>
    <property type="match status" value="4"/>
</dbReference>
<dbReference type="SUPFAM" id="SSF57586">
    <property type="entry name" value="TNF receptor-like"/>
    <property type="match status" value="2"/>
</dbReference>
<dbReference type="PROSITE" id="PS00652">
    <property type="entry name" value="TNFR_NGFR_1"/>
    <property type="match status" value="1"/>
</dbReference>
<dbReference type="PROSITE" id="PS50050">
    <property type="entry name" value="TNFR_NGFR_2"/>
    <property type="match status" value="4"/>
</dbReference>